<feature type="chain" id="PRO_1000164735" description="Deoxyguanosinetriphosphate triphosphohydrolase-like protein">
    <location>
        <begin position="1"/>
        <end position="378"/>
    </location>
</feature>
<feature type="domain" description="HD" evidence="2">
    <location>
        <begin position="62"/>
        <end position="198"/>
    </location>
</feature>
<protein>
    <recommendedName>
        <fullName evidence="1">Deoxyguanosinetriphosphate triphosphohydrolase-like protein</fullName>
    </recommendedName>
</protein>
<name>DGTL1_PARDP</name>
<proteinExistence type="inferred from homology"/>
<gene>
    <name type="ordered locus">Pden_0927</name>
</gene>
<sequence length="378" mass="42538">MTAPYACQPEESRGRRWPERMSTFRSPWQRDRDRIIHSSAFRRLKHKTQVFVEHEGDYYRTRLTHTIEVAQVARTIAGALGLNTDLAETVALAHDLGHPPFGHTGEDALAALMAPYGGFDHNAQALRIVTRLERHYADFDGLNLTWESLEGIAKHNGPVTGDLPYALAEVNAEWDLELHTNASAEAQVAAVADDVAYNHHDLHDGLRAGLFTEADLAELPVVGEALARVDALHPGLEPMRRRHEALRRVFGVMVEDVIAVAQNRLASLQPQNVQEIRDMEGPIIRFSKPLYQNLKAIKLFLFQRMYRAPSVVVERRRVTEMLNGLFPLFLDDPSKMPRTWFQAAEAAGDETGRARVVLDYVAGMTDRFAIQEAQRLLG</sequence>
<keyword id="KW-0378">Hydrolase</keyword>
<keyword id="KW-1185">Reference proteome</keyword>
<reference key="1">
    <citation type="submission" date="2006-12" db="EMBL/GenBank/DDBJ databases">
        <title>Complete sequence of chromosome 1 of Paracoccus denitrificans PD1222.</title>
        <authorList>
            <person name="Copeland A."/>
            <person name="Lucas S."/>
            <person name="Lapidus A."/>
            <person name="Barry K."/>
            <person name="Detter J.C."/>
            <person name="Glavina del Rio T."/>
            <person name="Hammon N."/>
            <person name="Israni S."/>
            <person name="Dalin E."/>
            <person name="Tice H."/>
            <person name="Pitluck S."/>
            <person name="Munk A.C."/>
            <person name="Brettin T."/>
            <person name="Bruce D."/>
            <person name="Han C."/>
            <person name="Tapia R."/>
            <person name="Gilna P."/>
            <person name="Schmutz J."/>
            <person name="Larimer F."/>
            <person name="Land M."/>
            <person name="Hauser L."/>
            <person name="Kyrpides N."/>
            <person name="Lykidis A."/>
            <person name="Spiro S."/>
            <person name="Richardson D.J."/>
            <person name="Moir J.W.B."/>
            <person name="Ferguson S.J."/>
            <person name="van Spanning R.J.M."/>
            <person name="Richardson P."/>
        </authorList>
    </citation>
    <scope>NUCLEOTIDE SEQUENCE [LARGE SCALE GENOMIC DNA]</scope>
    <source>
        <strain>Pd 1222</strain>
    </source>
</reference>
<comment type="similarity">
    <text evidence="1">Belongs to the dGTPase family. Type 2 subfamily.</text>
</comment>
<evidence type="ECO:0000255" key="1">
    <source>
        <dbReference type="HAMAP-Rule" id="MF_01212"/>
    </source>
</evidence>
<evidence type="ECO:0000255" key="2">
    <source>
        <dbReference type="PROSITE-ProRule" id="PRU01175"/>
    </source>
</evidence>
<accession>A1B0J4</accession>
<dbReference type="EMBL" id="CP000489">
    <property type="protein sequence ID" value="ABL69038.1"/>
    <property type="molecule type" value="Genomic_DNA"/>
</dbReference>
<dbReference type="SMR" id="A1B0J4"/>
<dbReference type="STRING" id="318586.Pden_0927"/>
<dbReference type="EnsemblBacteria" id="ABL69038">
    <property type="protein sequence ID" value="ABL69038"/>
    <property type="gene ID" value="Pden_0927"/>
</dbReference>
<dbReference type="KEGG" id="pde:Pden_0927"/>
<dbReference type="eggNOG" id="COG0232">
    <property type="taxonomic scope" value="Bacteria"/>
</dbReference>
<dbReference type="HOGENOM" id="CLU_028163_1_0_5"/>
<dbReference type="OrthoDB" id="9803619at2"/>
<dbReference type="Proteomes" id="UP000000361">
    <property type="component" value="Chromosome 1"/>
</dbReference>
<dbReference type="GO" id="GO:0008832">
    <property type="term" value="F:dGTPase activity"/>
    <property type="evidence" value="ECO:0007669"/>
    <property type="project" value="TreeGrafter"/>
</dbReference>
<dbReference type="GO" id="GO:0006203">
    <property type="term" value="P:dGTP catabolic process"/>
    <property type="evidence" value="ECO:0007669"/>
    <property type="project" value="TreeGrafter"/>
</dbReference>
<dbReference type="CDD" id="cd00077">
    <property type="entry name" value="HDc"/>
    <property type="match status" value="1"/>
</dbReference>
<dbReference type="Gene3D" id="1.10.3210.10">
    <property type="entry name" value="Hypothetical protein af1432"/>
    <property type="match status" value="1"/>
</dbReference>
<dbReference type="HAMAP" id="MF_01212">
    <property type="entry name" value="dGTPase_type2"/>
    <property type="match status" value="1"/>
</dbReference>
<dbReference type="InterPro" id="IPR006261">
    <property type="entry name" value="dGTPase"/>
</dbReference>
<dbReference type="InterPro" id="IPR050135">
    <property type="entry name" value="dGTPase-like"/>
</dbReference>
<dbReference type="InterPro" id="IPR023023">
    <property type="entry name" value="dNTPase_2"/>
</dbReference>
<dbReference type="InterPro" id="IPR003607">
    <property type="entry name" value="HD/PDEase_dom"/>
</dbReference>
<dbReference type="InterPro" id="IPR006674">
    <property type="entry name" value="HD_domain"/>
</dbReference>
<dbReference type="InterPro" id="IPR026875">
    <property type="entry name" value="PHydrolase_assoc_dom"/>
</dbReference>
<dbReference type="NCBIfam" id="TIGR01353">
    <property type="entry name" value="dGTP_triPase"/>
    <property type="match status" value="1"/>
</dbReference>
<dbReference type="NCBIfam" id="NF002326">
    <property type="entry name" value="PRK01286.1-1"/>
    <property type="match status" value="1"/>
</dbReference>
<dbReference type="NCBIfam" id="NF002328">
    <property type="entry name" value="PRK01286.1-3"/>
    <property type="match status" value="1"/>
</dbReference>
<dbReference type="PANTHER" id="PTHR11373:SF43">
    <property type="entry name" value="DEOXYGUANOSINETRIPHOSPHATE TRIPHOSPHOHYDROLASE-LIKE PROTEIN"/>
    <property type="match status" value="1"/>
</dbReference>
<dbReference type="PANTHER" id="PTHR11373">
    <property type="entry name" value="DEOXYNUCLEOSIDE TRIPHOSPHATE TRIPHOSPHOHYDROLASE"/>
    <property type="match status" value="1"/>
</dbReference>
<dbReference type="Pfam" id="PF01966">
    <property type="entry name" value="HD"/>
    <property type="match status" value="1"/>
</dbReference>
<dbReference type="Pfam" id="PF13286">
    <property type="entry name" value="HD_assoc"/>
    <property type="match status" value="1"/>
</dbReference>
<dbReference type="SMART" id="SM00471">
    <property type="entry name" value="HDc"/>
    <property type="match status" value="1"/>
</dbReference>
<dbReference type="SUPFAM" id="SSF109604">
    <property type="entry name" value="HD-domain/PDEase-like"/>
    <property type="match status" value="1"/>
</dbReference>
<dbReference type="PROSITE" id="PS51831">
    <property type="entry name" value="HD"/>
    <property type="match status" value="1"/>
</dbReference>
<organism>
    <name type="scientific">Paracoccus denitrificans (strain Pd 1222)</name>
    <dbReference type="NCBI Taxonomy" id="318586"/>
    <lineage>
        <taxon>Bacteria</taxon>
        <taxon>Pseudomonadati</taxon>
        <taxon>Pseudomonadota</taxon>
        <taxon>Alphaproteobacteria</taxon>
        <taxon>Rhodobacterales</taxon>
        <taxon>Paracoccaceae</taxon>
        <taxon>Paracoccus</taxon>
    </lineage>
</organism>